<dbReference type="EC" id="2.3.1.275" evidence="1"/>
<dbReference type="EMBL" id="AE014074">
    <property type="protein sequence ID" value="AAM79230.1"/>
    <property type="status" value="ALT_INIT"/>
    <property type="molecule type" value="Genomic_DNA"/>
</dbReference>
<dbReference type="RefSeq" id="WP_002984911.1">
    <property type="nucleotide sequence ID" value="NC_004070.1"/>
</dbReference>
<dbReference type="SMR" id="P0DD10"/>
<dbReference type="GeneID" id="69900991"/>
<dbReference type="KEGG" id="spg:SpyM3_0623"/>
<dbReference type="HOGENOM" id="CLU_081254_4_0_9"/>
<dbReference type="UniPathway" id="UPA00085"/>
<dbReference type="Proteomes" id="UP000000564">
    <property type="component" value="Chromosome"/>
</dbReference>
<dbReference type="GO" id="GO:0005886">
    <property type="term" value="C:plasma membrane"/>
    <property type="evidence" value="ECO:0007669"/>
    <property type="project" value="UniProtKB-SubCell"/>
</dbReference>
<dbReference type="GO" id="GO:0043772">
    <property type="term" value="F:acyl-phosphate glycerol-3-phosphate acyltransferase activity"/>
    <property type="evidence" value="ECO:0007669"/>
    <property type="project" value="UniProtKB-UniRule"/>
</dbReference>
<dbReference type="GO" id="GO:0008654">
    <property type="term" value="P:phospholipid biosynthetic process"/>
    <property type="evidence" value="ECO:0007669"/>
    <property type="project" value="UniProtKB-UniRule"/>
</dbReference>
<dbReference type="HAMAP" id="MF_01043">
    <property type="entry name" value="PlsY"/>
    <property type="match status" value="1"/>
</dbReference>
<dbReference type="InterPro" id="IPR003811">
    <property type="entry name" value="G3P_acylTferase_PlsY"/>
</dbReference>
<dbReference type="NCBIfam" id="TIGR00023">
    <property type="entry name" value="glycerol-3-phosphate 1-O-acyltransferase PlsY"/>
    <property type="match status" value="1"/>
</dbReference>
<dbReference type="PANTHER" id="PTHR30309:SF0">
    <property type="entry name" value="GLYCEROL-3-PHOSPHATE ACYLTRANSFERASE-RELATED"/>
    <property type="match status" value="1"/>
</dbReference>
<dbReference type="PANTHER" id="PTHR30309">
    <property type="entry name" value="INNER MEMBRANE PROTEIN YGIH"/>
    <property type="match status" value="1"/>
</dbReference>
<dbReference type="Pfam" id="PF02660">
    <property type="entry name" value="G3P_acyltransf"/>
    <property type="match status" value="1"/>
</dbReference>
<dbReference type="SMART" id="SM01207">
    <property type="entry name" value="G3P_acyltransf"/>
    <property type="match status" value="1"/>
</dbReference>
<feature type="chain" id="PRO_0000188469" description="Glycerol-3-phosphate acyltransferase">
    <location>
        <begin position="1"/>
        <end position="213"/>
    </location>
</feature>
<feature type="transmembrane region" description="Helical" evidence="1">
    <location>
        <begin position="3"/>
        <end position="23"/>
    </location>
</feature>
<feature type="transmembrane region" description="Helical" evidence="1">
    <location>
        <begin position="68"/>
        <end position="88"/>
    </location>
</feature>
<feature type="transmembrane region" description="Helical" evidence="1">
    <location>
        <begin position="112"/>
        <end position="132"/>
    </location>
</feature>
<feature type="transmembrane region" description="Helical" evidence="1">
    <location>
        <begin position="134"/>
        <end position="154"/>
    </location>
</feature>
<feature type="transmembrane region" description="Helical" evidence="1">
    <location>
        <begin position="163"/>
        <end position="183"/>
    </location>
</feature>
<sequence length="213" mass="23369">MKLLLFITIAYLLGSIPTGLWIGQYFYHINLREHGSGNTGTTNTFRILGVKAGTATLAIDMFKGTLSILLPIIFGMTSISSIAIGFFAVLGHTFPIFANFKGGKAVATSAGVLLGFAPLYLFFLASIFVLVLYLFSMISLASVVSAIVGVLSVLTFPAIHFLLPNYDYFLTFIVILLAFIIIIRHKDNISRIKHHTENLIPWGLNLSKQVPKK</sequence>
<accession>P0DD10</accession>
<accession>P67169</accession>
<accession>Q8K7U8</accession>
<accession>Q9A070</accession>
<name>PLSY_STRP3</name>
<evidence type="ECO:0000255" key="1">
    <source>
        <dbReference type="HAMAP-Rule" id="MF_01043"/>
    </source>
</evidence>
<evidence type="ECO:0000305" key="2"/>
<keyword id="KW-1003">Cell membrane</keyword>
<keyword id="KW-0444">Lipid biosynthesis</keyword>
<keyword id="KW-0443">Lipid metabolism</keyword>
<keyword id="KW-0472">Membrane</keyword>
<keyword id="KW-0594">Phospholipid biosynthesis</keyword>
<keyword id="KW-1208">Phospholipid metabolism</keyword>
<keyword id="KW-0808">Transferase</keyword>
<keyword id="KW-0812">Transmembrane</keyword>
<keyword id="KW-1133">Transmembrane helix</keyword>
<reference key="1">
    <citation type="journal article" date="2002" name="Proc. Natl. Acad. Sci. U.S.A.">
        <title>Genome sequence of a serotype M3 strain of group A Streptococcus: phage-encoded toxins, the high-virulence phenotype, and clone emergence.</title>
        <authorList>
            <person name="Beres S.B."/>
            <person name="Sylva G.L."/>
            <person name="Barbian K.D."/>
            <person name="Lei B."/>
            <person name="Hoff J.S."/>
            <person name="Mammarella N.D."/>
            <person name="Liu M.-Y."/>
            <person name="Smoot J.C."/>
            <person name="Porcella S.F."/>
            <person name="Parkins L.D."/>
            <person name="Campbell D.S."/>
            <person name="Smith T.M."/>
            <person name="McCormick J.K."/>
            <person name="Leung D.Y.M."/>
            <person name="Schlievert P.M."/>
            <person name="Musser J.M."/>
        </authorList>
    </citation>
    <scope>NUCLEOTIDE SEQUENCE [LARGE SCALE GENOMIC DNA]</scope>
    <source>
        <strain>ATCC BAA-595 / MGAS315</strain>
    </source>
</reference>
<organism>
    <name type="scientific">Streptococcus pyogenes serotype M3 (strain ATCC BAA-595 / MGAS315)</name>
    <dbReference type="NCBI Taxonomy" id="198466"/>
    <lineage>
        <taxon>Bacteria</taxon>
        <taxon>Bacillati</taxon>
        <taxon>Bacillota</taxon>
        <taxon>Bacilli</taxon>
        <taxon>Lactobacillales</taxon>
        <taxon>Streptococcaceae</taxon>
        <taxon>Streptococcus</taxon>
    </lineage>
</organism>
<protein>
    <recommendedName>
        <fullName evidence="1">Glycerol-3-phosphate acyltransferase</fullName>
    </recommendedName>
    <alternativeName>
        <fullName evidence="1">Acyl-PO4 G3P acyltransferase</fullName>
    </alternativeName>
    <alternativeName>
        <fullName evidence="1">Acyl-phosphate--glycerol-3-phosphate acyltransferase</fullName>
    </alternativeName>
    <alternativeName>
        <fullName evidence="1">G3P acyltransferase</fullName>
        <shortName evidence="1">GPAT</shortName>
        <ecNumber evidence="1">2.3.1.275</ecNumber>
    </alternativeName>
    <alternativeName>
        <fullName evidence="1">Lysophosphatidic acid synthase</fullName>
        <shortName evidence="1">LPA synthase</shortName>
    </alternativeName>
</protein>
<proteinExistence type="inferred from homology"/>
<comment type="function">
    <text evidence="1">Catalyzes the transfer of an acyl group from acyl-phosphate (acyl-PO(4)) to glycerol-3-phosphate (G3P) to form lysophosphatidic acid (LPA). This enzyme utilizes acyl-phosphate as fatty acyl donor, but not acyl-CoA or acyl-ACP.</text>
</comment>
<comment type="catalytic activity">
    <reaction evidence="1">
        <text>an acyl phosphate + sn-glycerol 3-phosphate = a 1-acyl-sn-glycero-3-phosphate + phosphate</text>
        <dbReference type="Rhea" id="RHEA:34075"/>
        <dbReference type="ChEBI" id="CHEBI:43474"/>
        <dbReference type="ChEBI" id="CHEBI:57597"/>
        <dbReference type="ChEBI" id="CHEBI:57970"/>
        <dbReference type="ChEBI" id="CHEBI:59918"/>
        <dbReference type="EC" id="2.3.1.275"/>
    </reaction>
</comment>
<comment type="pathway">
    <text evidence="1">Lipid metabolism; phospholipid metabolism.</text>
</comment>
<comment type="subunit">
    <text evidence="1">Probably interacts with PlsX.</text>
</comment>
<comment type="subcellular location">
    <subcellularLocation>
        <location evidence="1">Cell membrane</location>
        <topology evidence="1">Multi-pass membrane protein</topology>
    </subcellularLocation>
</comment>
<comment type="similarity">
    <text evidence="1">Belongs to the PlsY family.</text>
</comment>
<comment type="sequence caution" evidence="2">
    <conflict type="erroneous initiation">
        <sequence resource="EMBL-CDS" id="AAM79230"/>
    </conflict>
</comment>
<gene>
    <name evidence="1" type="primary">plsY</name>
    <name type="ordered locus">SpyM3_0623</name>
</gene>